<name>DUSB_SERMA</name>
<sequence length="334" mass="36940">MRIGHHQLTNCLIAAPMAGITDRPFRTLCHAMGAGMAVSEMLSSNPEVWRTDKSRLRMVHSDEPGIRSVQIAGCDPDDMAAAARINVASGAQLIDINMGCPAKKVNRKLAGSALLQYPDLVKRILHAVVDAVDVPVTLKIRTGWAPEHRNCVEIAQLAEDCGIQALTIHGRTRACLFNGDAEYDSIRAVKQSVSIPIIANGDITDPHKARAVLDYTGADALMIGRAAQGRPWIFREIQHYLDTGELLPPLPLGEVKRLLIGHIRELHGFYGQGKGFRIARKHVSWYLQEHAPNDQFRRTFNAIEDASEQLEALEAYFENLSVKKELTELCSNNE</sequence>
<dbReference type="EC" id="1.3.1.-" evidence="1"/>
<dbReference type="EMBL" id="AF040378">
    <property type="protein sequence ID" value="AAC77880.1"/>
    <property type="molecule type" value="Genomic_DNA"/>
</dbReference>
<dbReference type="SMR" id="O52532"/>
<dbReference type="STRING" id="273526.SMDB11_3673"/>
<dbReference type="GO" id="GO:0050660">
    <property type="term" value="F:flavin adenine dinucleotide binding"/>
    <property type="evidence" value="ECO:0007669"/>
    <property type="project" value="InterPro"/>
</dbReference>
<dbReference type="GO" id="GO:0010181">
    <property type="term" value="F:FMN binding"/>
    <property type="evidence" value="ECO:0007669"/>
    <property type="project" value="UniProtKB-UniRule"/>
</dbReference>
<dbReference type="GO" id="GO:0000049">
    <property type="term" value="F:tRNA binding"/>
    <property type="evidence" value="ECO:0007669"/>
    <property type="project" value="UniProtKB-UniRule"/>
</dbReference>
<dbReference type="GO" id="GO:0017150">
    <property type="term" value="F:tRNA dihydrouridine synthase activity"/>
    <property type="evidence" value="ECO:0007669"/>
    <property type="project" value="UniProtKB-UniRule"/>
</dbReference>
<dbReference type="CDD" id="cd02801">
    <property type="entry name" value="DUS_like_FMN"/>
    <property type="match status" value="1"/>
</dbReference>
<dbReference type="FunFam" id="1.10.1200.80:FF:000001">
    <property type="entry name" value="tRNA-dihydrouridine synthase B"/>
    <property type="match status" value="1"/>
</dbReference>
<dbReference type="FunFam" id="3.20.20.70:FF:000051">
    <property type="entry name" value="tRNA-dihydrouridine synthase B"/>
    <property type="match status" value="1"/>
</dbReference>
<dbReference type="Gene3D" id="3.20.20.70">
    <property type="entry name" value="Aldolase class I"/>
    <property type="match status" value="1"/>
</dbReference>
<dbReference type="Gene3D" id="1.10.1200.80">
    <property type="entry name" value="Putative flavin oxidoreducatase, domain 2"/>
    <property type="match status" value="1"/>
</dbReference>
<dbReference type="HAMAP" id="MF_02042">
    <property type="entry name" value="DusB_subfam"/>
    <property type="match status" value="1"/>
</dbReference>
<dbReference type="InterPro" id="IPR013785">
    <property type="entry name" value="Aldolase_TIM"/>
</dbReference>
<dbReference type="InterPro" id="IPR035587">
    <property type="entry name" value="DUS-like_FMN-bd"/>
</dbReference>
<dbReference type="InterPro" id="IPR001269">
    <property type="entry name" value="DUS_fam"/>
</dbReference>
<dbReference type="InterPro" id="IPR032887">
    <property type="entry name" value="DusB"/>
</dbReference>
<dbReference type="InterPro" id="IPR004652">
    <property type="entry name" value="DusB-like"/>
</dbReference>
<dbReference type="InterPro" id="IPR024036">
    <property type="entry name" value="tRNA-dHydroUridine_Synthase_C"/>
</dbReference>
<dbReference type="InterPro" id="IPR018517">
    <property type="entry name" value="tRNA_hU_synthase_CS"/>
</dbReference>
<dbReference type="NCBIfam" id="TIGR00737">
    <property type="entry name" value="nifR3_yhdG"/>
    <property type="match status" value="1"/>
</dbReference>
<dbReference type="PANTHER" id="PTHR45846">
    <property type="entry name" value="TRNA-DIHYDROURIDINE(47) SYNTHASE [NAD(P)(+)]-LIKE"/>
    <property type="match status" value="1"/>
</dbReference>
<dbReference type="PANTHER" id="PTHR45846:SF1">
    <property type="entry name" value="TRNA-DIHYDROURIDINE(47) SYNTHASE [NAD(P)(+)]-LIKE"/>
    <property type="match status" value="1"/>
</dbReference>
<dbReference type="Pfam" id="PF01207">
    <property type="entry name" value="Dus"/>
    <property type="match status" value="1"/>
</dbReference>
<dbReference type="PIRSF" id="PIRSF006621">
    <property type="entry name" value="Dus"/>
    <property type="match status" value="1"/>
</dbReference>
<dbReference type="SUPFAM" id="SSF51395">
    <property type="entry name" value="FMN-linked oxidoreductases"/>
    <property type="match status" value="1"/>
</dbReference>
<dbReference type="PROSITE" id="PS01136">
    <property type="entry name" value="UPF0034"/>
    <property type="match status" value="1"/>
</dbReference>
<protein>
    <recommendedName>
        <fullName evidence="1">tRNA-dihydrouridine synthase B</fullName>
        <ecNumber evidence="1">1.3.1.-</ecNumber>
    </recommendedName>
</protein>
<feature type="chain" id="PRO_0000162098" description="tRNA-dihydrouridine synthase B">
    <location>
        <begin position="1"/>
        <end position="334"/>
    </location>
</feature>
<feature type="active site" description="Proton donor" evidence="1">
    <location>
        <position position="100"/>
    </location>
</feature>
<feature type="binding site" evidence="1">
    <location>
        <begin position="16"/>
        <end position="18"/>
    </location>
    <ligand>
        <name>FMN</name>
        <dbReference type="ChEBI" id="CHEBI:58210"/>
    </ligand>
</feature>
<feature type="binding site" evidence="1">
    <location>
        <position position="70"/>
    </location>
    <ligand>
        <name>FMN</name>
        <dbReference type="ChEBI" id="CHEBI:58210"/>
    </ligand>
</feature>
<feature type="binding site" evidence="1">
    <location>
        <position position="139"/>
    </location>
    <ligand>
        <name>FMN</name>
        <dbReference type="ChEBI" id="CHEBI:58210"/>
    </ligand>
</feature>
<feature type="binding site" evidence="1">
    <location>
        <begin position="200"/>
        <end position="202"/>
    </location>
    <ligand>
        <name>FMN</name>
        <dbReference type="ChEBI" id="CHEBI:58210"/>
    </ligand>
</feature>
<feature type="binding site" evidence="1">
    <location>
        <begin position="224"/>
        <end position="225"/>
    </location>
    <ligand>
        <name>FMN</name>
        <dbReference type="ChEBI" id="CHEBI:58210"/>
    </ligand>
</feature>
<proteinExistence type="inferred from homology"/>
<gene>
    <name evidence="1" type="primary">dusB</name>
</gene>
<accession>O52532</accession>
<reference key="1">
    <citation type="journal article" date="1998" name="J. Bacteriol.">
        <title>Identification and characterization of the fis operon in enteric bacteria.</title>
        <authorList>
            <person name="Beach M.B."/>
            <person name="Osuna R."/>
        </authorList>
    </citation>
    <scope>NUCLEOTIDE SEQUENCE [GENOMIC DNA]</scope>
</reference>
<organism>
    <name type="scientific">Serratia marcescens</name>
    <dbReference type="NCBI Taxonomy" id="615"/>
    <lineage>
        <taxon>Bacteria</taxon>
        <taxon>Pseudomonadati</taxon>
        <taxon>Pseudomonadota</taxon>
        <taxon>Gammaproteobacteria</taxon>
        <taxon>Enterobacterales</taxon>
        <taxon>Yersiniaceae</taxon>
        <taxon>Serratia</taxon>
    </lineage>
</organism>
<evidence type="ECO:0000255" key="1">
    <source>
        <dbReference type="HAMAP-Rule" id="MF_02042"/>
    </source>
</evidence>
<comment type="function">
    <text evidence="1">Catalyzes the synthesis of 5,6-dihydrouridine (D), a modified base found in the D-loop of most tRNAs, via the reduction of the C5-C6 double bond in target uridines.</text>
</comment>
<comment type="catalytic activity">
    <reaction evidence="1">
        <text>a 5,6-dihydrouridine in tRNA + NAD(+) = a uridine in tRNA + NADH + H(+)</text>
        <dbReference type="Rhea" id="RHEA:54452"/>
        <dbReference type="Rhea" id="RHEA-COMP:13339"/>
        <dbReference type="Rhea" id="RHEA-COMP:13887"/>
        <dbReference type="ChEBI" id="CHEBI:15378"/>
        <dbReference type="ChEBI" id="CHEBI:57540"/>
        <dbReference type="ChEBI" id="CHEBI:57945"/>
        <dbReference type="ChEBI" id="CHEBI:65315"/>
        <dbReference type="ChEBI" id="CHEBI:74443"/>
    </reaction>
</comment>
<comment type="catalytic activity">
    <reaction evidence="1">
        <text>a 5,6-dihydrouridine in tRNA + NADP(+) = a uridine in tRNA + NADPH + H(+)</text>
        <dbReference type="Rhea" id="RHEA:23624"/>
        <dbReference type="Rhea" id="RHEA-COMP:13339"/>
        <dbReference type="Rhea" id="RHEA-COMP:13887"/>
        <dbReference type="ChEBI" id="CHEBI:15378"/>
        <dbReference type="ChEBI" id="CHEBI:57783"/>
        <dbReference type="ChEBI" id="CHEBI:58349"/>
        <dbReference type="ChEBI" id="CHEBI:65315"/>
        <dbReference type="ChEBI" id="CHEBI:74443"/>
    </reaction>
</comment>
<comment type="cofactor">
    <cofactor evidence="1">
        <name>FMN</name>
        <dbReference type="ChEBI" id="CHEBI:58210"/>
    </cofactor>
</comment>
<comment type="similarity">
    <text evidence="1">Belongs to the Dus family. DusB subfamily.</text>
</comment>
<keyword id="KW-0285">Flavoprotein</keyword>
<keyword id="KW-0288">FMN</keyword>
<keyword id="KW-0521">NADP</keyword>
<keyword id="KW-0560">Oxidoreductase</keyword>
<keyword id="KW-0694">RNA-binding</keyword>
<keyword id="KW-0819">tRNA processing</keyword>
<keyword id="KW-0820">tRNA-binding</keyword>